<sequence length="556" mass="61425">MSVSAFNRRWAAVILEALTRHGVRHICIAPGSRSTPLTLAAAENSTFIHHTHFDERGLGHLALGLAKVSKQPVAVIVTSGTAVANLYPALIEAGLTGEKLILLTADRPPELIDCGANQAIRQPGMFASHPTHSISLPRPTQDIPARWLVSTIDHALGTLHVGGVHINCPFAEPLYGEMDDTGLSWQQRLGDWWQDDKPWLREAPRLESEKQRDWFFWRQKRGVVVAGRMSAEEGKKVALWAQTLGWPLIGDVLSQTGQPLPCADLWLGNAKATSELQQAQIVVQLGSSLTGKRLLQWQASCEPEEYWIVDDIEGRLDPAHHRGRRLIANIADWLELHPAEKRQPWCVEIPRLAEQAMQAVIARRDAFGEAQLAHRICDYLPEQGQLFVGNSLVVRLIDALSQLPAGYPVYSNRGASGIDGLLSTAAGVQRASGKPTLAIVGDLSALYDLNALALLRQVSAPLVLIVVNNNGGQIFSLLPTPQSERERFYLMPQNVHFEHAAAMFELKYHRPQNWQELETAFADAWRTPTTTVIEMVVNDTDGAQTLQQLLAQVSHL</sequence>
<feature type="chain" id="PRO_1000187073" description="2-succinyl-5-enolpyruvyl-6-hydroxy-3-cyclohexene-1-carboxylate synthase">
    <location>
        <begin position="1"/>
        <end position="556"/>
    </location>
</feature>
<reference key="1">
    <citation type="journal article" date="2009" name="PLoS Genet.">
        <title>Organised genome dynamics in the Escherichia coli species results in highly diverse adaptive paths.</title>
        <authorList>
            <person name="Touchon M."/>
            <person name="Hoede C."/>
            <person name="Tenaillon O."/>
            <person name="Barbe V."/>
            <person name="Baeriswyl S."/>
            <person name="Bidet P."/>
            <person name="Bingen E."/>
            <person name="Bonacorsi S."/>
            <person name="Bouchier C."/>
            <person name="Bouvet O."/>
            <person name="Calteau A."/>
            <person name="Chiapello H."/>
            <person name="Clermont O."/>
            <person name="Cruveiller S."/>
            <person name="Danchin A."/>
            <person name="Diard M."/>
            <person name="Dossat C."/>
            <person name="Karoui M.E."/>
            <person name="Frapy E."/>
            <person name="Garry L."/>
            <person name="Ghigo J.M."/>
            <person name="Gilles A.M."/>
            <person name="Johnson J."/>
            <person name="Le Bouguenec C."/>
            <person name="Lescat M."/>
            <person name="Mangenot S."/>
            <person name="Martinez-Jehanne V."/>
            <person name="Matic I."/>
            <person name="Nassif X."/>
            <person name="Oztas S."/>
            <person name="Petit M.A."/>
            <person name="Pichon C."/>
            <person name="Rouy Z."/>
            <person name="Ruf C.S."/>
            <person name="Schneider D."/>
            <person name="Tourret J."/>
            <person name="Vacherie B."/>
            <person name="Vallenet D."/>
            <person name="Medigue C."/>
            <person name="Rocha E.P.C."/>
            <person name="Denamur E."/>
        </authorList>
    </citation>
    <scope>NUCLEOTIDE SEQUENCE [LARGE SCALE GENOMIC DNA]</scope>
    <source>
        <strain>IAI1</strain>
    </source>
</reference>
<comment type="function">
    <text evidence="1">Catalyzes the thiamine diphosphate-dependent decarboxylation of 2-oxoglutarate and the subsequent addition of the resulting succinic semialdehyde-thiamine pyrophosphate anion to isochorismate to yield 2-succinyl-5-enolpyruvyl-6-hydroxy-3-cyclohexene-1-carboxylate (SEPHCHC).</text>
</comment>
<comment type="catalytic activity">
    <reaction evidence="1">
        <text>isochorismate + 2-oxoglutarate + H(+) = 5-enolpyruvoyl-6-hydroxy-2-succinyl-cyclohex-3-ene-1-carboxylate + CO2</text>
        <dbReference type="Rhea" id="RHEA:25593"/>
        <dbReference type="ChEBI" id="CHEBI:15378"/>
        <dbReference type="ChEBI" id="CHEBI:16526"/>
        <dbReference type="ChEBI" id="CHEBI:16810"/>
        <dbReference type="ChEBI" id="CHEBI:29780"/>
        <dbReference type="ChEBI" id="CHEBI:58818"/>
        <dbReference type="EC" id="2.2.1.9"/>
    </reaction>
</comment>
<comment type="cofactor">
    <cofactor evidence="1">
        <name>Mg(2+)</name>
        <dbReference type="ChEBI" id="CHEBI:18420"/>
    </cofactor>
    <cofactor evidence="1">
        <name>Mn(2+)</name>
        <dbReference type="ChEBI" id="CHEBI:29035"/>
    </cofactor>
</comment>
<comment type="cofactor">
    <cofactor evidence="1">
        <name>thiamine diphosphate</name>
        <dbReference type="ChEBI" id="CHEBI:58937"/>
    </cofactor>
    <text evidence="1">Binds 1 thiamine pyrophosphate per subunit.</text>
</comment>
<comment type="pathway">
    <text evidence="1">Quinol/quinone metabolism; 1,4-dihydroxy-2-naphthoate biosynthesis; 1,4-dihydroxy-2-naphthoate from chorismate: step 2/7.</text>
</comment>
<comment type="pathway">
    <text evidence="1">Quinol/quinone metabolism; menaquinone biosynthesis.</text>
</comment>
<comment type="subunit">
    <text evidence="1">Homodimer.</text>
</comment>
<comment type="similarity">
    <text evidence="1">Belongs to the TPP enzyme family. MenD subfamily.</text>
</comment>
<gene>
    <name evidence="1" type="primary">menD</name>
    <name type="ordered locus">ECIAI1_2342</name>
</gene>
<proteinExistence type="inferred from homology"/>
<dbReference type="EC" id="2.2.1.9" evidence="1"/>
<dbReference type="EMBL" id="CU928160">
    <property type="protein sequence ID" value="CAQ99184.1"/>
    <property type="molecule type" value="Genomic_DNA"/>
</dbReference>
<dbReference type="RefSeq" id="WP_001352726.1">
    <property type="nucleotide sequence ID" value="NC_011741.1"/>
</dbReference>
<dbReference type="SMR" id="B7M5U7"/>
<dbReference type="KEGG" id="ecr:ECIAI1_2342"/>
<dbReference type="HOGENOM" id="CLU_006051_3_0_6"/>
<dbReference type="UniPathway" id="UPA00079"/>
<dbReference type="UniPathway" id="UPA01057">
    <property type="reaction ID" value="UER00164"/>
</dbReference>
<dbReference type="GO" id="GO:0070204">
    <property type="term" value="F:2-succinyl-5-enolpyruvyl-6-hydroxy-3-cyclohexene-1-carboxylic-acid synthase activity"/>
    <property type="evidence" value="ECO:0007669"/>
    <property type="project" value="UniProtKB-UniRule"/>
</dbReference>
<dbReference type="GO" id="GO:0000287">
    <property type="term" value="F:magnesium ion binding"/>
    <property type="evidence" value="ECO:0007669"/>
    <property type="project" value="UniProtKB-UniRule"/>
</dbReference>
<dbReference type="GO" id="GO:0030145">
    <property type="term" value="F:manganese ion binding"/>
    <property type="evidence" value="ECO:0007669"/>
    <property type="project" value="UniProtKB-UniRule"/>
</dbReference>
<dbReference type="GO" id="GO:0030976">
    <property type="term" value="F:thiamine pyrophosphate binding"/>
    <property type="evidence" value="ECO:0007669"/>
    <property type="project" value="UniProtKB-UniRule"/>
</dbReference>
<dbReference type="GO" id="GO:0009234">
    <property type="term" value="P:menaquinone biosynthetic process"/>
    <property type="evidence" value="ECO:0007669"/>
    <property type="project" value="UniProtKB-UniRule"/>
</dbReference>
<dbReference type="CDD" id="cd07037">
    <property type="entry name" value="TPP_PYR_MenD"/>
    <property type="match status" value="1"/>
</dbReference>
<dbReference type="CDD" id="cd02009">
    <property type="entry name" value="TPP_SHCHC_synthase"/>
    <property type="match status" value="1"/>
</dbReference>
<dbReference type="FunFam" id="3.40.50.1220:FF:000010">
    <property type="entry name" value="2-succinyl-5-enolpyruvyl-6-hydroxy-3-cyclohexene-1-carboxylate synthase"/>
    <property type="match status" value="1"/>
</dbReference>
<dbReference type="FunFam" id="3.40.50.970:FF:000029">
    <property type="entry name" value="2-succinyl-5-enolpyruvyl-6-hydroxy-3-cyclohexene-1-carboxylate synthase"/>
    <property type="match status" value="1"/>
</dbReference>
<dbReference type="FunFam" id="3.40.50.970:FF:000035">
    <property type="entry name" value="2-succinyl-5-enolpyruvyl-6-hydroxy-3-cyclohexene-1-carboxylate synthase"/>
    <property type="match status" value="1"/>
</dbReference>
<dbReference type="Gene3D" id="3.40.50.970">
    <property type="match status" value="2"/>
</dbReference>
<dbReference type="Gene3D" id="3.40.50.1220">
    <property type="entry name" value="TPP-binding domain"/>
    <property type="match status" value="1"/>
</dbReference>
<dbReference type="HAMAP" id="MF_01659">
    <property type="entry name" value="MenD"/>
    <property type="match status" value="1"/>
</dbReference>
<dbReference type="InterPro" id="IPR004433">
    <property type="entry name" value="MenaQ_synth_MenD"/>
</dbReference>
<dbReference type="InterPro" id="IPR032264">
    <property type="entry name" value="MenD_middle"/>
</dbReference>
<dbReference type="InterPro" id="IPR029061">
    <property type="entry name" value="THDP-binding"/>
</dbReference>
<dbReference type="InterPro" id="IPR012001">
    <property type="entry name" value="Thiamin_PyroP_enz_TPP-bd_dom"/>
</dbReference>
<dbReference type="InterPro" id="IPR011766">
    <property type="entry name" value="TPP_enzyme_TPP-bd"/>
</dbReference>
<dbReference type="NCBIfam" id="TIGR00173">
    <property type="entry name" value="menD"/>
    <property type="match status" value="1"/>
</dbReference>
<dbReference type="PANTHER" id="PTHR42916">
    <property type="entry name" value="2-SUCCINYL-5-ENOLPYRUVYL-6-HYDROXY-3-CYCLOHEXENE-1-CARBOXYLATE SYNTHASE"/>
    <property type="match status" value="1"/>
</dbReference>
<dbReference type="PANTHER" id="PTHR42916:SF1">
    <property type="entry name" value="PROTEIN PHYLLO, CHLOROPLASTIC"/>
    <property type="match status" value="1"/>
</dbReference>
<dbReference type="Pfam" id="PF02775">
    <property type="entry name" value="TPP_enzyme_C"/>
    <property type="match status" value="1"/>
</dbReference>
<dbReference type="Pfam" id="PF16582">
    <property type="entry name" value="TPP_enzyme_M_2"/>
    <property type="match status" value="1"/>
</dbReference>
<dbReference type="Pfam" id="PF02776">
    <property type="entry name" value="TPP_enzyme_N"/>
    <property type="match status" value="1"/>
</dbReference>
<dbReference type="PIRSF" id="PIRSF004983">
    <property type="entry name" value="MenD"/>
    <property type="match status" value="1"/>
</dbReference>
<dbReference type="SUPFAM" id="SSF52518">
    <property type="entry name" value="Thiamin diphosphate-binding fold (THDP-binding)"/>
    <property type="match status" value="2"/>
</dbReference>
<accession>B7M5U7</accession>
<organism>
    <name type="scientific">Escherichia coli O8 (strain IAI1)</name>
    <dbReference type="NCBI Taxonomy" id="585034"/>
    <lineage>
        <taxon>Bacteria</taxon>
        <taxon>Pseudomonadati</taxon>
        <taxon>Pseudomonadota</taxon>
        <taxon>Gammaproteobacteria</taxon>
        <taxon>Enterobacterales</taxon>
        <taxon>Enterobacteriaceae</taxon>
        <taxon>Escherichia</taxon>
    </lineage>
</organism>
<keyword id="KW-0460">Magnesium</keyword>
<keyword id="KW-0464">Manganese</keyword>
<keyword id="KW-0474">Menaquinone biosynthesis</keyword>
<keyword id="KW-0479">Metal-binding</keyword>
<keyword id="KW-0786">Thiamine pyrophosphate</keyword>
<keyword id="KW-0808">Transferase</keyword>
<evidence type="ECO:0000255" key="1">
    <source>
        <dbReference type="HAMAP-Rule" id="MF_01659"/>
    </source>
</evidence>
<name>MEND_ECO8A</name>
<protein>
    <recommendedName>
        <fullName evidence="1">2-succinyl-5-enolpyruvyl-6-hydroxy-3-cyclohexene-1-carboxylate synthase</fullName>
        <shortName evidence="1">SEPHCHC synthase</shortName>
        <ecNumber evidence="1">2.2.1.9</ecNumber>
    </recommendedName>
    <alternativeName>
        <fullName evidence="1">Menaquinone biosynthesis protein MenD</fullName>
    </alternativeName>
</protein>